<keyword id="KW-0131">Cell cycle</keyword>
<keyword id="KW-0132">Cell division</keyword>
<keyword id="KW-0997">Cell inner membrane</keyword>
<keyword id="KW-1003">Cell membrane</keyword>
<keyword id="KW-0133">Cell shape</keyword>
<keyword id="KW-0961">Cell wall biogenesis/degradation</keyword>
<keyword id="KW-0460">Magnesium</keyword>
<keyword id="KW-0472">Membrane</keyword>
<keyword id="KW-0479">Metal-binding</keyword>
<keyword id="KW-0573">Peptidoglycan synthesis</keyword>
<keyword id="KW-0808">Transferase</keyword>
<keyword id="KW-0812">Transmembrane</keyword>
<keyword id="KW-1133">Transmembrane helix</keyword>
<protein>
    <recommendedName>
        <fullName evidence="1">Phospho-N-acetylmuramoyl-pentapeptide-transferase</fullName>
        <ecNumber evidence="1">2.7.8.13</ecNumber>
    </recommendedName>
    <alternativeName>
        <fullName evidence="1">UDP-MurNAc-pentapeptide phosphotransferase</fullName>
    </alternativeName>
</protein>
<gene>
    <name evidence="1" type="primary">mraY</name>
    <name type="ordered locus">UTI89_C0096</name>
</gene>
<comment type="function">
    <text evidence="1">Catalyzes the initial step of the lipid cycle reactions in the biosynthesis of the cell wall peptidoglycan: transfers peptidoglycan precursor phospho-MurNAc-pentapeptide from UDP-MurNAc-pentapeptide onto the lipid carrier undecaprenyl phosphate, yielding undecaprenyl-pyrophosphoryl-MurNAc-pentapeptide, known as lipid I.</text>
</comment>
<comment type="catalytic activity">
    <reaction evidence="1">
        <text>UDP-N-acetyl-alpha-D-muramoyl-L-alanyl-gamma-D-glutamyl-meso-2,6-diaminopimeloyl-D-alanyl-D-alanine + di-trans,octa-cis-undecaprenyl phosphate = di-trans,octa-cis-undecaprenyl diphospho-N-acetyl-alpha-D-muramoyl-L-alanyl-D-glutamyl-meso-2,6-diaminopimeloyl-D-alanyl-D-alanine + UMP</text>
        <dbReference type="Rhea" id="RHEA:28386"/>
        <dbReference type="ChEBI" id="CHEBI:57865"/>
        <dbReference type="ChEBI" id="CHEBI:60392"/>
        <dbReference type="ChEBI" id="CHEBI:61386"/>
        <dbReference type="ChEBI" id="CHEBI:61387"/>
        <dbReference type="EC" id="2.7.8.13"/>
    </reaction>
</comment>
<comment type="cofactor">
    <cofactor evidence="1">
        <name>Mg(2+)</name>
        <dbReference type="ChEBI" id="CHEBI:18420"/>
    </cofactor>
</comment>
<comment type="pathway">
    <text evidence="1">Cell wall biogenesis; peptidoglycan biosynthesis.</text>
</comment>
<comment type="subcellular location">
    <subcellularLocation>
        <location evidence="1">Cell inner membrane</location>
        <topology evidence="1">Multi-pass membrane protein</topology>
    </subcellularLocation>
</comment>
<comment type="similarity">
    <text evidence="1">Belongs to the glycosyltransferase 4 family. MraY subfamily.</text>
</comment>
<feature type="chain" id="PRO_1000002970" description="Phospho-N-acetylmuramoyl-pentapeptide-transferase">
    <location>
        <begin position="1"/>
        <end position="360"/>
    </location>
</feature>
<feature type="topological domain" description="Periplasmic" evidence="1">
    <location>
        <begin position="1"/>
        <end position="25"/>
    </location>
</feature>
<feature type="transmembrane region" description="Helical" evidence="1">
    <location>
        <begin position="26"/>
        <end position="46"/>
    </location>
</feature>
<feature type="topological domain" description="Cytoplasmic" evidence="1">
    <location>
        <begin position="47"/>
        <end position="71"/>
    </location>
</feature>
<feature type="transmembrane region" description="Helical" evidence="1">
    <location>
        <begin position="72"/>
        <end position="92"/>
    </location>
</feature>
<feature type="topological domain" description="Periplasmic" evidence="1">
    <location>
        <position position="93"/>
    </location>
</feature>
<feature type="transmembrane region" description="Helical" evidence="1">
    <location>
        <begin position="94"/>
        <end position="114"/>
    </location>
</feature>
<feature type="topological domain" description="Cytoplasmic" evidence="1">
    <location>
        <begin position="115"/>
        <end position="131"/>
    </location>
</feature>
<feature type="transmembrane region" description="Helical" evidence="1">
    <location>
        <begin position="132"/>
        <end position="152"/>
    </location>
</feature>
<feature type="topological domain" description="Periplasmic" evidence="1">
    <location>
        <begin position="153"/>
        <end position="167"/>
    </location>
</feature>
<feature type="transmembrane region" description="Helical" evidence="1">
    <location>
        <begin position="168"/>
        <end position="188"/>
    </location>
</feature>
<feature type="topological domain" description="Cytoplasmic" evidence="1">
    <location>
        <begin position="189"/>
        <end position="198"/>
    </location>
</feature>
<feature type="transmembrane region" description="Helical" evidence="1">
    <location>
        <begin position="199"/>
        <end position="219"/>
    </location>
</feature>
<feature type="topological domain" description="Periplasmic" evidence="1">
    <location>
        <begin position="220"/>
        <end position="235"/>
    </location>
</feature>
<feature type="transmembrane region" description="Helical" evidence="1">
    <location>
        <begin position="236"/>
        <end position="256"/>
    </location>
</feature>
<feature type="topological domain" description="Cytoplasmic" evidence="1">
    <location>
        <begin position="257"/>
        <end position="262"/>
    </location>
</feature>
<feature type="transmembrane region" description="Helical" evidence="1">
    <location>
        <begin position="263"/>
        <end position="283"/>
    </location>
</feature>
<feature type="topological domain" description="Periplasmic" evidence="1">
    <location>
        <begin position="284"/>
        <end position="287"/>
    </location>
</feature>
<feature type="transmembrane region" description="Helical" evidence="1">
    <location>
        <begin position="288"/>
        <end position="308"/>
    </location>
</feature>
<feature type="topological domain" description="Cytoplasmic" evidence="1">
    <location>
        <begin position="309"/>
        <end position="337"/>
    </location>
</feature>
<feature type="transmembrane region" description="Helical" evidence="1">
    <location>
        <begin position="338"/>
        <end position="358"/>
    </location>
</feature>
<feature type="topological domain" description="Periplasmic" evidence="1">
    <location>
        <begin position="359"/>
        <end position="360"/>
    </location>
</feature>
<evidence type="ECO:0000255" key="1">
    <source>
        <dbReference type="HAMAP-Rule" id="MF_00038"/>
    </source>
</evidence>
<proteinExistence type="inferred from homology"/>
<sequence>MLVWLAEHLVKYYSGFNVFSYLTFRAIVSLLTALFISLWMGPRMIAHLQKLSFGQVVRNDGPESHFSKRGTPTMGGIMILTAIVISVLLWAYPSNPYVWCVLVVLVGYGVIGFVDDYRKVVRKDTKGLIARWKYFWMSVIALGVAFALYLAGKDTPATQLVVPFFKDVMPQLGLFYILLAYFVIVGTGNAVNLTDGLDGLAIMPTVFVAGGFALVAWATGNMNFASYLHIPYLRHAGELVIVCTAIVGAGLGFLWFNTYPAQVFMGDVGSLALGGALGIIAVLLRQEFLLVIMGGVFVVETLSVILQVGSFKLRGQRIFRMAPIHHHYELKGWPEPRVIVRFWIISLMLVLIGLATLKVR</sequence>
<name>MRAY_ECOUT</name>
<organism>
    <name type="scientific">Escherichia coli (strain UTI89 / UPEC)</name>
    <dbReference type="NCBI Taxonomy" id="364106"/>
    <lineage>
        <taxon>Bacteria</taxon>
        <taxon>Pseudomonadati</taxon>
        <taxon>Pseudomonadota</taxon>
        <taxon>Gammaproteobacteria</taxon>
        <taxon>Enterobacterales</taxon>
        <taxon>Enterobacteriaceae</taxon>
        <taxon>Escherichia</taxon>
    </lineage>
</organism>
<reference key="1">
    <citation type="journal article" date="2006" name="Proc. Natl. Acad. Sci. U.S.A.">
        <title>Identification of genes subject to positive selection in uropathogenic strains of Escherichia coli: a comparative genomics approach.</title>
        <authorList>
            <person name="Chen S.L."/>
            <person name="Hung C.-S."/>
            <person name="Xu J."/>
            <person name="Reigstad C.S."/>
            <person name="Magrini V."/>
            <person name="Sabo A."/>
            <person name="Blasiar D."/>
            <person name="Bieri T."/>
            <person name="Meyer R.R."/>
            <person name="Ozersky P."/>
            <person name="Armstrong J.R."/>
            <person name="Fulton R.S."/>
            <person name="Latreille J.P."/>
            <person name="Spieth J."/>
            <person name="Hooton T.M."/>
            <person name="Mardis E.R."/>
            <person name="Hultgren S.J."/>
            <person name="Gordon J.I."/>
        </authorList>
    </citation>
    <scope>NUCLEOTIDE SEQUENCE [LARGE SCALE GENOMIC DNA]</scope>
    <source>
        <strain>UTI89 / UPEC</strain>
    </source>
</reference>
<accession>Q1RGA8</accession>
<dbReference type="EC" id="2.7.8.13" evidence="1"/>
<dbReference type="EMBL" id="CP000243">
    <property type="protein sequence ID" value="ABE05606.1"/>
    <property type="molecule type" value="Genomic_DNA"/>
</dbReference>
<dbReference type="RefSeq" id="WP_000964131.1">
    <property type="nucleotide sequence ID" value="NZ_CP064825.1"/>
</dbReference>
<dbReference type="SMR" id="Q1RGA8"/>
<dbReference type="GeneID" id="93777347"/>
<dbReference type="KEGG" id="eci:UTI89_C0096"/>
<dbReference type="HOGENOM" id="CLU_023982_0_0_6"/>
<dbReference type="UniPathway" id="UPA00219"/>
<dbReference type="Proteomes" id="UP000001952">
    <property type="component" value="Chromosome"/>
</dbReference>
<dbReference type="GO" id="GO:0005886">
    <property type="term" value="C:plasma membrane"/>
    <property type="evidence" value="ECO:0007669"/>
    <property type="project" value="UniProtKB-SubCell"/>
</dbReference>
<dbReference type="GO" id="GO:0046872">
    <property type="term" value="F:metal ion binding"/>
    <property type="evidence" value="ECO:0007669"/>
    <property type="project" value="UniProtKB-KW"/>
</dbReference>
<dbReference type="GO" id="GO:0008963">
    <property type="term" value="F:phospho-N-acetylmuramoyl-pentapeptide-transferase activity"/>
    <property type="evidence" value="ECO:0007669"/>
    <property type="project" value="UniProtKB-UniRule"/>
</dbReference>
<dbReference type="GO" id="GO:0051992">
    <property type="term" value="F:UDP-N-acetylmuramoyl-L-alanyl-D-glutamyl-meso-2,6-diaminopimelyl-D-alanyl-D-alanine:undecaprenyl-phosphate transferase activity"/>
    <property type="evidence" value="ECO:0007669"/>
    <property type="project" value="RHEA"/>
</dbReference>
<dbReference type="GO" id="GO:0051301">
    <property type="term" value="P:cell division"/>
    <property type="evidence" value="ECO:0007669"/>
    <property type="project" value="UniProtKB-KW"/>
</dbReference>
<dbReference type="GO" id="GO:0071555">
    <property type="term" value="P:cell wall organization"/>
    <property type="evidence" value="ECO:0007669"/>
    <property type="project" value="UniProtKB-KW"/>
</dbReference>
<dbReference type="GO" id="GO:0009252">
    <property type="term" value="P:peptidoglycan biosynthetic process"/>
    <property type="evidence" value="ECO:0007669"/>
    <property type="project" value="UniProtKB-UniRule"/>
</dbReference>
<dbReference type="GO" id="GO:0008360">
    <property type="term" value="P:regulation of cell shape"/>
    <property type="evidence" value="ECO:0007669"/>
    <property type="project" value="UniProtKB-KW"/>
</dbReference>
<dbReference type="CDD" id="cd06852">
    <property type="entry name" value="GT_MraY"/>
    <property type="match status" value="1"/>
</dbReference>
<dbReference type="HAMAP" id="MF_00038">
    <property type="entry name" value="MraY"/>
    <property type="match status" value="1"/>
</dbReference>
<dbReference type="InterPro" id="IPR000715">
    <property type="entry name" value="Glycosyl_transferase_4"/>
</dbReference>
<dbReference type="InterPro" id="IPR003524">
    <property type="entry name" value="PNAcMuramoyl-5peptid_Trfase"/>
</dbReference>
<dbReference type="InterPro" id="IPR018480">
    <property type="entry name" value="PNAcMuramoyl-5peptid_Trfase_CS"/>
</dbReference>
<dbReference type="NCBIfam" id="TIGR00445">
    <property type="entry name" value="mraY"/>
    <property type="match status" value="1"/>
</dbReference>
<dbReference type="PANTHER" id="PTHR22926">
    <property type="entry name" value="PHOSPHO-N-ACETYLMURAMOYL-PENTAPEPTIDE-TRANSFERASE"/>
    <property type="match status" value="1"/>
</dbReference>
<dbReference type="PANTHER" id="PTHR22926:SF5">
    <property type="entry name" value="PHOSPHO-N-ACETYLMURAMOYL-PENTAPEPTIDE-TRANSFERASE HOMOLOG"/>
    <property type="match status" value="1"/>
</dbReference>
<dbReference type="Pfam" id="PF00953">
    <property type="entry name" value="Glycos_transf_4"/>
    <property type="match status" value="1"/>
</dbReference>
<dbReference type="Pfam" id="PF10555">
    <property type="entry name" value="MraY_sig1"/>
    <property type="match status" value="1"/>
</dbReference>
<dbReference type="PROSITE" id="PS01347">
    <property type="entry name" value="MRAY_1"/>
    <property type="match status" value="1"/>
</dbReference>
<dbReference type="PROSITE" id="PS01348">
    <property type="entry name" value="MRAY_2"/>
    <property type="match status" value="1"/>
</dbReference>